<comment type="function">
    <text evidence="1">Transcriptional regulator involved in defense response.</text>
</comment>
<comment type="subunit">
    <text evidence="5 6">Interacts with NPR1/NH1 (PubMed:15986920, PubMed:24919709). Interacts with NPR3/NH3 (PubMed:24919709).</text>
</comment>
<comment type="subcellular location">
    <subcellularLocation>
        <location evidence="2">Nucleus</location>
    </subcellularLocation>
</comment>
<comment type="similarity">
    <text evidence="10">Belongs to the bZIP family.</text>
</comment>
<sequence length="333" mass="37070">MADASSRTDTSTVLDTDDKNQMVDGQSGAIVPSNSSDRSDRSDKPMDQKVLRRLAQNREAARKSRLRKKAYVQQLESSKLKLASLEQEINKARQQGIYISSSGDQTHAMSGNGAMTFDLEYARWLEEQNKQINELRTAVNAHASDSDLRLIVDGIMAHYDEIFRLKGVAAKADVFHILSGMWKTPAERCFLWLGGFRSSELLKLLVNQLEPLTEQQLLGLSNLQQSSQQAEDALSQGMEALQQSLADTLAGSLGPSGSSGNVANYMGQMAMAMGKLGTLENFLRQADNLRQQTLHQMQRILTIRQAARALLAIHDYFSRLRALSSLWLARPRE</sequence>
<evidence type="ECO:0000250" key="1">
    <source>
        <dbReference type="UniProtKB" id="Q7X993"/>
    </source>
</evidence>
<evidence type="ECO:0000255" key="2">
    <source>
        <dbReference type="PROSITE-ProRule" id="PRU00978"/>
    </source>
</evidence>
<evidence type="ECO:0000255" key="3">
    <source>
        <dbReference type="PROSITE-ProRule" id="PRU01147"/>
    </source>
</evidence>
<evidence type="ECO:0000256" key="4">
    <source>
        <dbReference type="SAM" id="MobiDB-lite"/>
    </source>
</evidence>
<evidence type="ECO:0000269" key="5">
    <source>
    </source>
</evidence>
<evidence type="ECO:0000269" key="6">
    <source>
    </source>
</evidence>
<evidence type="ECO:0000303" key="7">
    <source>
    </source>
</evidence>
<evidence type="ECO:0000303" key="8">
    <source>
    </source>
</evidence>
<evidence type="ECO:0000303" key="9">
    <source ref="1"/>
</evidence>
<evidence type="ECO:0000305" key="10"/>
<evidence type="ECO:0000312" key="11">
    <source>
        <dbReference type="EMBL" id="ABF95638.1"/>
    </source>
</evidence>
<evidence type="ECO:0000312" key="12">
    <source>
        <dbReference type="EMBL" id="BAB72061.1"/>
    </source>
</evidence>
<evidence type="ECO:0000312" key="13">
    <source>
        <dbReference type="EMBL" id="BAF11859.1"/>
    </source>
</evidence>
<evidence type="ECO:0000312" key="14">
    <source>
        <dbReference type="EMBL" id="EEE58954.1"/>
    </source>
</evidence>
<keyword id="KW-0238">DNA-binding</keyword>
<keyword id="KW-0539">Nucleus</keyword>
<keyword id="KW-0611">Plant defense</keyword>
<keyword id="KW-1185">Reference proteome</keyword>
<keyword id="KW-0804">Transcription</keyword>
<keyword id="KW-0805">Transcription regulation</keyword>
<accession>Q6IVC3</accession>
<accession>Q8W5S0</accession>
<gene>
    <name evidence="8" type="primary">TGA2.2</name>
    <name evidence="13" type="ordered locus">Os03g0318600</name>
    <name evidence="11" type="ordered locus">LOC_Os03g20310</name>
    <name evidence="14" type="ORF">OsJ_10635</name>
</gene>
<feature type="chain" id="PRO_0000437013" description="Transcription factor TGA2.2">
    <location>
        <begin position="1"/>
        <end position="333"/>
    </location>
</feature>
<feature type="domain" description="bZIP" evidence="2">
    <location>
        <begin position="47"/>
        <end position="91"/>
    </location>
</feature>
<feature type="domain" description="DOG1" evidence="3">
    <location>
        <begin position="114"/>
        <end position="330"/>
    </location>
</feature>
<feature type="region of interest" description="Disordered" evidence="4">
    <location>
        <begin position="1"/>
        <end position="48"/>
    </location>
</feature>
<feature type="region of interest" description="Basic motif" evidence="2">
    <location>
        <begin position="49"/>
        <end position="69"/>
    </location>
</feature>
<feature type="region of interest" description="Leucine-zipper" evidence="2">
    <location>
        <begin position="75"/>
        <end position="89"/>
    </location>
</feature>
<feature type="compositionally biased region" description="Polar residues" evidence="4">
    <location>
        <begin position="1"/>
        <end position="14"/>
    </location>
</feature>
<feature type="compositionally biased region" description="Basic and acidic residues" evidence="4">
    <location>
        <begin position="37"/>
        <end position="48"/>
    </location>
</feature>
<feature type="sequence conflict" description="In Ref. 2; BAB72061." evidence="10" ref="2">
    <original>D</original>
    <variation>G</variation>
    <location>
        <position position="247"/>
    </location>
</feature>
<feature type="sequence conflict" description="In Ref. 2; BAB72061." evidence="10" ref="2">
    <original>N</original>
    <variation>S</variation>
    <location>
        <position position="288"/>
    </location>
</feature>
<name>TGA22_ORYSJ</name>
<dbReference type="EMBL" id="AY620414">
    <property type="protein sequence ID" value="AAT28674.1"/>
    <property type="molecule type" value="mRNA"/>
</dbReference>
<dbReference type="EMBL" id="AB051294">
    <property type="protein sequence ID" value="BAB72061.1"/>
    <property type="molecule type" value="mRNA"/>
</dbReference>
<dbReference type="EMBL" id="HM991173">
    <property type="protein sequence ID" value="AEF30416.1"/>
    <property type="molecule type" value="mRNA"/>
</dbReference>
<dbReference type="EMBL" id="DP000009">
    <property type="protein sequence ID" value="ABF95638.1"/>
    <property type="molecule type" value="Genomic_DNA"/>
</dbReference>
<dbReference type="EMBL" id="DP000009">
    <property type="protein sequence ID" value="ABF95639.1"/>
    <property type="molecule type" value="Genomic_DNA"/>
</dbReference>
<dbReference type="EMBL" id="DP000009">
    <property type="protein sequence ID" value="ABF95640.1"/>
    <property type="molecule type" value="Genomic_DNA"/>
</dbReference>
<dbReference type="EMBL" id="DP000009">
    <property type="protein sequence ID" value="ABF95641.1"/>
    <property type="molecule type" value="Genomic_DNA"/>
</dbReference>
<dbReference type="EMBL" id="AP008209">
    <property type="protein sequence ID" value="BAF11859.1"/>
    <property type="molecule type" value="Genomic_DNA"/>
</dbReference>
<dbReference type="EMBL" id="AP014959">
    <property type="protein sequence ID" value="BAS83919.1"/>
    <property type="molecule type" value="Genomic_DNA"/>
</dbReference>
<dbReference type="EMBL" id="CM000140">
    <property type="protein sequence ID" value="EEE58954.1"/>
    <property type="molecule type" value="Genomic_DNA"/>
</dbReference>
<dbReference type="EMBL" id="AK242257">
    <property type="protein sequence ID" value="BAH01240.1"/>
    <property type="molecule type" value="mRNA"/>
</dbReference>
<dbReference type="RefSeq" id="NP_001389073.1">
    <property type="nucleotide sequence ID" value="NM_001402144.1"/>
</dbReference>
<dbReference type="RefSeq" id="NP_001389074.1">
    <property type="nucleotide sequence ID" value="NM_001402145.1"/>
</dbReference>
<dbReference type="RefSeq" id="XP_015632465.1">
    <property type="nucleotide sequence ID" value="XM_015776979.1"/>
</dbReference>
<dbReference type="RefSeq" id="XP_015632466.1">
    <property type="nucleotide sequence ID" value="XM_015776980.1"/>
</dbReference>
<dbReference type="RefSeq" id="XP_015632467.1">
    <property type="nucleotide sequence ID" value="XM_015776981.3"/>
</dbReference>
<dbReference type="SMR" id="Q6IVC3"/>
<dbReference type="STRING" id="39947.Q6IVC3"/>
<dbReference type="PaxDb" id="39947-Q6IVC3"/>
<dbReference type="EnsemblPlants" id="Os03t0318600-01">
    <property type="protein sequence ID" value="Os03t0318600-01"/>
    <property type="gene ID" value="Os03g0318600"/>
</dbReference>
<dbReference type="GeneID" id="4332660"/>
<dbReference type="Gramene" id="Os03t0318600-01">
    <property type="protein sequence ID" value="Os03t0318600-01"/>
    <property type="gene ID" value="Os03g0318600"/>
</dbReference>
<dbReference type="KEGG" id="dosa:Os03g0318600"/>
<dbReference type="KEGG" id="osa:4332660"/>
<dbReference type="eggNOG" id="ENOG502QU32">
    <property type="taxonomic scope" value="Eukaryota"/>
</dbReference>
<dbReference type="HOGENOM" id="CLU_024782_1_0_1"/>
<dbReference type="InParanoid" id="Q6IVC3"/>
<dbReference type="OMA" id="DQPYRVE"/>
<dbReference type="OrthoDB" id="2015618at2759"/>
<dbReference type="PlantReactome" id="R-OSA-6788019">
    <property type="pathway name" value="Salicylic acid signaling"/>
</dbReference>
<dbReference type="Proteomes" id="UP000000763">
    <property type="component" value="Chromosome 3"/>
</dbReference>
<dbReference type="Proteomes" id="UP000007752">
    <property type="component" value="Chromosome 3"/>
</dbReference>
<dbReference type="Proteomes" id="UP000059680">
    <property type="component" value="Chromosome 3"/>
</dbReference>
<dbReference type="GO" id="GO:0005634">
    <property type="term" value="C:nucleus"/>
    <property type="evidence" value="ECO:0007669"/>
    <property type="project" value="UniProtKB-SubCell"/>
</dbReference>
<dbReference type="GO" id="GO:0003700">
    <property type="term" value="F:DNA-binding transcription factor activity"/>
    <property type="evidence" value="ECO:0007669"/>
    <property type="project" value="InterPro"/>
</dbReference>
<dbReference type="GO" id="GO:0043565">
    <property type="term" value="F:sequence-specific DNA binding"/>
    <property type="evidence" value="ECO:0007669"/>
    <property type="project" value="InterPro"/>
</dbReference>
<dbReference type="GO" id="GO:0006952">
    <property type="term" value="P:defense response"/>
    <property type="evidence" value="ECO:0007669"/>
    <property type="project" value="UniProtKB-KW"/>
</dbReference>
<dbReference type="GO" id="GO:0006351">
    <property type="term" value="P:DNA-templated transcription"/>
    <property type="evidence" value="ECO:0007669"/>
    <property type="project" value="InterPro"/>
</dbReference>
<dbReference type="FunFam" id="1.20.5.170:FF:000019">
    <property type="entry name" value="BZIP family transcription factor"/>
    <property type="match status" value="1"/>
</dbReference>
<dbReference type="Gene3D" id="1.20.5.170">
    <property type="match status" value="1"/>
</dbReference>
<dbReference type="InterPro" id="IPR004827">
    <property type="entry name" value="bZIP"/>
</dbReference>
<dbReference type="InterPro" id="IPR046347">
    <property type="entry name" value="bZIP_sf"/>
</dbReference>
<dbReference type="InterPro" id="IPR025422">
    <property type="entry name" value="TGA_domain"/>
</dbReference>
<dbReference type="PANTHER" id="PTHR45693:SF14">
    <property type="entry name" value="TRANSCRIPTION FACTOR TGA2.2"/>
    <property type="match status" value="1"/>
</dbReference>
<dbReference type="PANTHER" id="PTHR45693">
    <property type="entry name" value="TRANSCRIPTION FACTOR TGA9"/>
    <property type="match status" value="1"/>
</dbReference>
<dbReference type="Pfam" id="PF00170">
    <property type="entry name" value="bZIP_1"/>
    <property type="match status" value="1"/>
</dbReference>
<dbReference type="Pfam" id="PF14144">
    <property type="entry name" value="DOG1"/>
    <property type="match status" value="1"/>
</dbReference>
<dbReference type="SMART" id="SM00338">
    <property type="entry name" value="BRLZ"/>
    <property type="match status" value="1"/>
</dbReference>
<dbReference type="SUPFAM" id="SSF57959">
    <property type="entry name" value="Leucine zipper domain"/>
    <property type="match status" value="1"/>
</dbReference>
<dbReference type="PROSITE" id="PS50217">
    <property type="entry name" value="BZIP"/>
    <property type="match status" value="1"/>
</dbReference>
<dbReference type="PROSITE" id="PS00036">
    <property type="entry name" value="BZIP_BASIC"/>
    <property type="match status" value="1"/>
</dbReference>
<dbReference type="PROSITE" id="PS51806">
    <property type="entry name" value="DOG1"/>
    <property type="match status" value="1"/>
</dbReference>
<proteinExistence type="evidence at protein level"/>
<organism>
    <name type="scientific">Oryza sativa subsp. japonica</name>
    <name type="common">Rice</name>
    <dbReference type="NCBI Taxonomy" id="39947"/>
    <lineage>
        <taxon>Eukaryota</taxon>
        <taxon>Viridiplantae</taxon>
        <taxon>Streptophyta</taxon>
        <taxon>Embryophyta</taxon>
        <taxon>Tracheophyta</taxon>
        <taxon>Spermatophyta</taxon>
        <taxon>Magnoliopsida</taxon>
        <taxon>Liliopsida</taxon>
        <taxon>Poales</taxon>
        <taxon>Poaceae</taxon>
        <taxon>BOP clade</taxon>
        <taxon>Oryzoideae</taxon>
        <taxon>Oryzeae</taxon>
        <taxon>Oryzinae</taxon>
        <taxon>Oryza</taxon>
        <taxon>Oryza sativa</taxon>
    </lineage>
</organism>
<protein>
    <recommendedName>
        <fullName evidence="10">Transcription factor TGA2.2</fullName>
    </recommendedName>
    <alternativeName>
        <fullName evidence="12">OsNIF1</fullName>
    </alternativeName>
    <alternativeName>
        <fullName evidence="9">OsbZIP1</fullName>
    </alternativeName>
    <alternativeName>
        <fullName evidence="7">bZIP transcription factor 28</fullName>
        <shortName evidence="7">OsbZIP28</shortName>
    </alternativeName>
</protein>
<reference key="1">
    <citation type="journal article" date="2005" name="Plant Mol. Biol. Rep.">
        <title>Identification of a novel rice bZIP-type transcription factor gene, OsbZIP1 involved in response to infection of Magnaporthe grisea.</title>
        <authorList>
            <person name="Meng X.-B."/>
            <person name="Zhao W.-S."/>
            <person name="Lin R.-M."/>
            <person name="Wang M."/>
            <person name="Peng Y.-L."/>
        </authorList>
    </citation>
    <scope>NUCLEOTIDE SEQUENCE [MRNA]</scope>
</reference>
<reference key="2">
    <citation type="submission" date="2001-11" db="EMBL/GenBank/DDBJ databases">
        <title>cDNA cloning of bZIP transcription factors from rice.</title>
        <authorList>
            <person name="Yokoyama T."/>
            <person name="Motoyama T."/>
            <person name="Yoneyama K."/>
            <person name="Yamaguchi I."/>
        </authorList>
    </citation>
    <scope>NUCLEOTIDE SEQUENCE [MRNA]</scope>
</reference>
<reference key="3">
    <citation type="submission" date="2010-07" db="EMBL/GenBank/DDBJ databases">
        <title>Oryza sativa japonica group cultivar Dongjin putative TGA2-like protein 1 mRNA.</title>
        <authorList>
            <person name="Moon S.-J."/>
            <person name="Shin D."/>
            <person name="Kim B.-G."/>
            <person name="Park S.R."/>
            <person name="Byun M.-O."/>
        </authorList>
    </citation>
    <scope>NUCLEOTIDE SEQUENCE [MRNA]</scope>
    <source>
        <strain>cv. Dongjin</strain>
    </source>
</reference>
<reference key="4">
    <citation type="journal article" date="2005" name="Genome Res.">
        <title>Sequence, annotation, and analysis of synteny between rice chromosome 3 and diverged grass species.</title>
        <authorList>
            <consortium name="The rice chromosome 3 sequencing consortium"/>
            <person name="Buell C.R."/>
            <person name="Yuan Q."/>
            <person name="Ouyang S."/>
            <person name="Liu J."/>
            <person name="Zhu W."/>
            <person name="Wang A."/>
            <person name="Maiti R."/>
            <person name="Haas B."/>
            <person name="Wortman J."/>
            <person name="Pertea M."/>
            <person name="Jones K.M."/>
            <person name="Kim M."/>
            <person name="Overton L."/>
            <person name="Tsitrin T."/>
            <person name="Fadrosh D."/>
            <person name="Bera J."/>
            <person name="Weaver B."/>
            <person name="Jin S."/>
            <person name="Johri S."/>
            <person name="Reardon M."/>
            <person name="Webb K."/>
            <person name="Hill J."/>
            <person name="Moffat K."/>
            <person name="Tallon L."/>
            <person name="Van Aken S."/>
            <person name="Lewis M."/>
            <person name="Utterback T."/>
            <person name="Feldblyum T."/>
            <person name="Zismann V."/>
            <person name="Iobst S."/>
            <person name="Hsiao J."/>
            <person name="de Vazeille A.R."/>
            <person name="Salzberg S.L."/>
            <person name="White O."/>
            <person name="Fraser C.M."/>
            <person name="Yu Y."/>
            <person name="Kim H."/>
            <person name="Rambo T."/>
            <person name="Currie J."/>
            <person name="Collura K."/>
            <person name="Kernodle-Thompson S."/>
            <person name="Wei F."/>
            <person name="Kudrna K."/>
            <person name="Ammiraju J.S.S."/>
            <person name="Luo M."/>
            <person name="Goicoechea J.L."/>
            <person name="Wing R.A."/>
            <person name="Henry D."/>
            <person name="Oates R."/>
            <person name="Palmer M."/>
            <person name="Pries G."/>
            <person name="Saski C."/>
            <person name="Simmons J."/>
            <person name="Soderlund C."/>
            <person name="Nelson W."/>
            <person name="de la Bastide M."/>
            <person name="Spiegel L."/>
            <person name="Nascimento L."/>
            <person name="Huang E."/>
            <person name="Preston R."/>
            <person name="Zutavern T."/>
            <person name="Palmer L."/>
            <person name="O'Shaughnessy A."/>
            <person name="Dike S."/>
            <person name="McCombie W.R."/>
            <person name="Minx P."/>
            <person name="Cordum H."/>
            <person name="Wilson R."/>
            <person name="Jin W."/>
            <person name="Lee H.R."/>
            <person name="Jiang J."/>
            <person name="Jackson S."/>
        </authorList>
    </citation>
    <scope>NUCLEOTIDE SEQUENCE [LARGE SCALE GENOMIC DNA]</scope>
    <source>
        <strain>cv. Nipponbare</strain>
    </source>
</reference>
<reference key="5">
    <citation type="journal article" date="2005" name="Nature">
        <title>The map-based sequence of the rice genome.</title>
        <authorList>
            <consortium name="International rice genome sequencing project (IRGSP)"/>
        </authorList>
    </citation>
    <scope>NUCLEOTIDE SEQUENCE [LARGE SCALE GENOMIC DNA]</scope>
    <source>
        <strain>cv. Nipponbare</strain>
    </source>
</reference>
<reference key="6">
    <citation type="journal article" date="2008" name="Nucleic Acids Res.">
        <title>The rice annotation project database (RAP-DB): 2008 update.</title>
        <authorList>
            <consortium name="The rice annotation project (RAP)"/>
        </authorList>
    </citation>
    <scope>GENOME REANNOTATION</scope>
    <source>
        <strain>cv. Nipponbare</strain>
    </source>
</reference>
<reference key="7">
    <citation type="journal article" date="2013" name="Rice">
        <title>Improvement of the Oryza sativa Nipponbare reference genome using next generation sequence and optical map data.</title>
        <authorList>
            <person name="Kawahara Y."/>
            <person name="de la Bastide M."/>
            <person name="Hamilton J.P."/>
            <person name="Kanamori H."/>
            <person name="McCombie W.R."/>
            <person name="Ouyang S."/>
            <person name="Schwartz D.C."/>
            <person name="Tanaka T."/>
            <person name="Wu J."/>
            <person name="Zhou S."/>
            <person name="Childs K.L."/>
            <person name="Davidson R.M."/>
            <person name="Lin H."/>
            <person name="Quesada-Ocampo L."/>
            <person name="Vaillancourt B."/>
            <person name="Sakai H."/>
            <person name="Lee S.S."/>
            <person name="Kim J."/>
            <person name="Numa H."/>
            <person name="Itoh T."/>
            <person name="Buell C.R."/>
            <person name="Matsumoto T."/>
        </authorList>
    </citation>
    <scope>GENOME REANNOTATION</scope>
    <source>
        <strain>cv. Nipponbare</strain>
    </source>
</reference>
<reference key="8">
    <citation type="journal article" date="2005" name="PLoS Biol.">
        <title>The genomes of Oryza sativa: a history of duplications.</title>
        <authorList>
            <person name="Yu J."/>
            <person name="Wang J."/>
            <person name="Lin W."/>
            <person name="Li S."/>
            <person name="Li H."/>
            <person name="Zhou J."/>
            <person name="Ni P."/>
            <person name="Dong W."/>
            <person name="Hu S."/>
            <person name="Zeng C."/>
            <person name="Zhang J."/>
            <person name="Zhang Y."/>
            <person name="Li R."/>
            <person name="Xu Z."/>
            <person name="Li S."/>
            <person name="Li X."/>
            <person name="Zheng H."/>
            <person name="Cong L."/>
            <person name="Lin L."/>
            <person name="Yin J."/>
            <person name="Geng J."/>
            <person name="Li G."/>
            <person name="Shi J."/>
            <person name="Liu J."/>
            <person name="Lv H."/>
            <person name="Li J."/>
            <person name="Wang J."/>
            <person name="Deng Y."/>
            <person name="Ran L."/>
            <person name="Shi X."/>
            <person name="Wang X."/>
            <person name="Wu Q."/>
            <person name="Li C."/>
            <person name="Ren X."/>
            <person name="Wang J."/>
            <person name="Wang X."/>
            <person name="Li D."/>
            <person name="Liu D."/>
            <person name="Zhang X."/>
            <person name="Ji Z."/>
            <person name="Zhao W."/>
            <person name="Sun Y."/>
            <person name="Zhang Z."/>
            <person name="Bao J."/>
            <person name="Han Y."/>
            <person name="Dong L."/>
            <person name="Ji J."/>
            <person name="Chen P."/>
            <person name="Wu S."/>
            <person name="Liu J."/>
            <person name="Xiao Y."/>
            <person name="Bu D."/>
            <person name="Tan J."/>
            <person name="Yang L."/>
            <person name="Ye C."/>
            <person name="Zhang J."/>
            <person name="Xu J."/>
            <person name="Zhou Y."/>
            <person name="Yu Y."/>
            <person name="Zhang B."/>
            <person name="Zhuang S."/>
            <person name="Wei H."/>
            <person name="Liu B."/>
            <person name="Lei M."/>
            <person name="Yu H."/>
            <person name="Li Y."/>
            <person name="Xu H."/>
            <person name="Wei S."/>
            <person name="He X."/>
            <person name="Fang L."/>
            <person name="Zhang Z."/>
            <person name="Zhang Y."/>
            <person name="Huang X."/>
            <person name="Su Z."/>
            <person name="Tong W."/>
            <person name="Li J."/>
            <person name="Tong Z."/>
            <person name="Li S."/>
            <person name="Ye J."/>
            <person name="Wang L."/>
            <person name="Fang L."/>
            <person name="Lei T."/>
            <person name="Chen C.-S."/>
            <person name="Chen H.-C."/>
            <person name="Xu Z."/>
            <person name="Li H."/>
            <person name="Huang H."/>
            <person name="Zhang F."/>
            <person name="Xu H."/>
            <person name="Li N."/>
            <person name="Zhao C."/>
            <person name="Li S."/>
            <person name="Dong L."/>
            <person name="Huang Y."/>
            <person name="Li L."/>
            <person name="Xi Y."/>
            <person name="Qi Q."/>
            <person name="Li W."/>
            <person name="Zhang B."/>
            <person name="Hu W."/>
            <person name="Zhang Y."/>
            <person name="Tian X."/>
            <person name="Jiao Y."/>
            <person name="Liang X."/>
            <person name="Jin J."/>
            <person name="Gao L."/>
            <person name="Zheng W."/>
            <person name="Hao B."/>
            <person name="Liu S.-M."/>
            <person name="Wang W."/>
            <person name="Yuan L."/>
            <person name="Cao M."/>
            <person name="McDermott J."/>
            <person name="Samudrala R."/>
            <person name="Wang J."/>
            <person name="Wong G.K.-S."/>
            <person name="Yang H."/>
        </authorList>
    </citation>
    <scope>NUCLEOTIDE SEQUENCE [LARGE SCALE GENOMIC DNA]</scope>
    <source>
        <strain>cv. Nipponbare</strain>
    </source>
</reference>
<reference key="9">
    <citation type="submission" date="2006-10" db="EMBL/GenBank/DDBJ databases">
        <title>Oryza sativa full length cDNA.</title>
        <authorList>
            <consortium name="The rice full-length cDNA consortium"/>
        </authorList>
    </citation>
    <scope>NUCLEOTIDE SEQUENCE [LARGE SCALE MRNA]</scope>
    <source>
        <strain>cv. Nipponbare</strain>
    </source>
</reference>
<reference key="10">
    <citation type="journal article" date="2005" name="Mol. Plant Microbe Interact.">
        <title>Overexpression of a rice NPR1 homolog leads to constitutive activation of defense response and hypersensitivity to light.</title>
        <authorList>
            <person name="Chern M."/>
            <person name="Fitzgerald H.A."/>
            <person name="Canlas P.E."/>
            <person name="Navarre D.A."/>
            <person name="Ronald P.C."/>
        </authorList>
    </citation>
    <scope>INTERACTION WITH NPR1/NH1</scope>
</reference>
<reference key="11">
    <citation type="journal article" date="2008" name="Plant Physiol.">
        <title>Genomic survey and gene expression analysis of the basic leucine zipper transcription factor family in rice.</title>
        <authorList>
            <person name="Nijhawan A."/>
            <person name="Jain M."/>
            <person name="Tyagi A.K."/>
            <person name="Khurana J.P."/>
        </authorList>
    </citation>
    <scope>GENE FAMILY</scope>
    <scope>NOMENCLATURE</scope>
</reference>
<reference key="12">
    <citation type="journal article" date="2014" name="BMC Genomics">
        <title>Interaction specificity and coexpression of rice NPR1 homologs 1 and 3 (NH1 and NH3), TGA transcription factors and negative regulator of resistance (NRR) proteins.</title>
        <authorList>
            <person name="Chern M."/>
            <person name="Bai W."/>
            <person name="Ruan D."/>
            <person name="Oh T."/>
            <person name="Chen X."/>
            <person name="Ronald P.C."/>
        </authorList>
    </citation>
    <scope>INTERACTION WITH NPR1/NH1 AND NPR3/NH3</scope>
</reference>